<keyword id="KW-0046">Antibiotic resistance</keyword>
<keyword id="KW-0067">ATP-binding</keyword>
<keyword id="KW-1003">Cell membrane</keyword>
<keyword id="KW-0418">Kinase</keyword>
<keyword id="KW-0472">Membrane</keyword>
<keyword id="KW-0547">Nucleotide-binding</keyword>
<keyword id="KW-0808">Transferase</keyword>
<keyword id="KW-0812">Transmembrane</keyword>
<keyword id="KW-1133">Transmembrane helix</keyword>
<keyword id="KW-0902">Two-component regulatory system</keyword>
<keyword id="KW-0843">Virulence</keyword>
<sequence>MNNLKWVAYFLKSRMNWIFWILFLNFLMLGISLIDYDFPIDSLFYIVSLNLSLTMIFLLLTYFKEVKLYKHFDKDKEIEEIKHKDLAETPFQRHTVDYLYRQISAHKEKVVEQQLQLNMHEQTITEFVHDIKTPVTAMKLLIDQEKNQERKQALLYEWSRINSMLDTQLYITRLESQRKDMYFDYVSLKRMVIDEIQLTRHISQVKGIGFDVDFKVDDYVYTDIKWCRMIIRQILSNALKYSENFNIEIGTELNDQHVSLYIKDYGRGISKKDMPRIFERGFTSTANRNETTSSGMGLYLVNSVKDQLGIHLQVTSTVGKGTTVRLIFPLQNEIVERMSEVTNLSF</sequence>
<proteinExistence type="inferred from homology"/>
<accession>A6QEW9</accession>
<dbReference type="EC" id="2.7.13.3"/>
<dbReference type="EMBL" id="AP009351">
    <property type="protein sequence ID" value="BAF66901.1"/>
    <property type="molecule type" value="Genomic_DNA"/>
</dbReference>
<dbReference type="RefSeq" id="WP_001061252.1">
    <property type="nucleotide sequence ID" value="NZ_JBBIAE010000002.1"/>
</dbReference>
<dbReference type="SMR" id="A6QEW9"/>
<dbReference type="KEGG" id="sae:NWMN_0629"/>
<dbReference type="HOGENOM" id="CLU_000445_13_1_9"/>
<dbReference type="Proteomes" id="UP000006386">
    <property type="component" value="Chromosome"/>
</dbReference>
<dbReference type="GO" id="GO:0005886">
    <property type="term" value="C:plasma membrane"/>
    <property type="evidence" value="ECO:0007669"/>
    <property type="project" value="UniProtKB-SubCell"/>
</dbReference>
<dbReference type="GO" id="GO:0005524">
    <property type="term" value="F:ATP binding"/>
    <property type="evidence" value="ECO:0007669"/>
    <property type="project" value="UniProtKB-KW"/>
</dbReference>
<dbReference type="GO" id="GO:0004721">
    <property type="term" value="F:phosphoprotein phosphatase activity"/>
    <property type="evidence" value="ECO:0007669"/>
    <property type="project" value="TreeGrafter"/>
</dbReference>
<dbReference type="GO" id="GO:0000155">
    <property type="term" value="F:phosphorelay sensor kinase activity"/>
    <property type="evidence" value="ECO:0007669"/>
    <property type="project" value="InterPro"/>
</dbReference>
<dbReference type="GO" id="GO:0016036">
    <property type="term" value="P:cellular response to phosphate starvation"/>
    <property type="evidence" value="ECO:0007669"/>
    <property type="project" value="TreeGrafter"/>
</dbReference>
<dbReference type="GO" id="GO:0046677">
    <property type="term" value="P:response to antibiotic"/>
    <property type="evidence" value="ECO:0007669"/>
    <property type="project" value="UniProtKB-KW"/>
</dbReference>
<dbReference type="Gene3D" id="3.30.565.10">
    <property type="entry name" value="Histidine kinase-like ATPase, C-terminal domain"/>
    <property type="match status" value="1"/>
</dbReference>
<dbReference type="InterPro" id="IPR050351">
    <property type="entry name" value="2-comp_sensor_kinase"/>
</dbReference>
<dbReference type="InterPro" id="IPR036890">
    <property type="entry name" value="HATPase_C_sf"/>
</dbReference>
<dbReference type="InterPro" id="IPR005467">
    <property type="entry name" value="His_kinase_dom"/>
</dbReference>
<dbReference type="InterPro" id="IPR036097">
    <property type="entry name" value="HisK_dim/P_sf"/>
</dbReference>
<dbReference type="InterPro" id="IPR004358">
    <property type="entry name" value="Sig_transdc_His_kin-like_C"/>
</dbReference>
<dbReference type="PANTHER" id="PTHR45453:SF2">
    <property type="entry name" value="HISTIDINE KINASE"/>
    <property type="match status" value="1"/>
</dbReference>
<dbReference type="PANTHER" id="PTHR45453">
    <property type="entry name" value="PHOSPHATE REGULON SENSOR PROTEIN PHOR"/>
    <property type="match status" value="1"/>
</dbReference>
<dbReference type="Pfam" id="PF02518">
    <property type="entry name" value="HATPase_c"/>
    <property type="match status" value="1"/>
</dbReference>
<dbReference type="PRINTS" id="PR00344">
    <property type="entry name" value="BCTRLSENSOR"/>
</dbReference>
<dbReference type="SMART" id="SM00387">
    <property type="entry name" value="HATPase_c"/>
    <property type="match status" value="1"/>
</dbReference>
<dbReference type="SUPFAM" id="SSF55874">
    <property type="entry name" value="ATPase domain of HSP90 chaperone/DNA topoisomerase II/histidine kinase"/>
    <property type="match status" value="1"/>
</dbReference>
<dbReference type="SUPFAM" id="SSF47384">
    <property type="entry name" value="Homodimeric domain of signal transducing histidine kinase"/>
    <property type="match status" value="1"/>
</dbReference>
<dbReference type="PROSITE" id="PS50109">
    <property type="entry name" value="HIS_KIN"/>
    <property type="match status" value="1"/>
</dbReference>
<organism>
    <name type="scientific">Staphylococcus aureus (strain Newman)</name>
    <dbReference type="NCBI Taxonomy" id="426430"/>
    <lineage>
        <taxon>Bacteria</taxon>
        <taxon>Bacillati</taxon>
        <taxon>Bacillota</taxon>
        <taxon>Bacilli</taxon>
        <taxon>Bacillales</taxon>
        <taxon>Staphylococcaceae</taxon>
        <taxon>Staphylococcus</taxon>
    </lineage>
</organism>
<feature type="chain" id="PRO_0000347924" description="Sensor protein kinase GraS">
    <location>
        <begin position="1"/>
        <end position="346"/>
    </location>
</feature>
<feature type="transmembrane region" description="Helical" evidence="2">
    <location>
        <begin position="15"/>
        <end position="35"/>
    </location>
</feature>
<feature type="transmembrane region" description="Helical" evidence="2">
    <location>
        <begin position="43"/>
        <end position="63"/>
    </location>
</feature>
<feature type="domain" description="Histidine kinase" evidence="3">
    <location>
        <begin position="126"/>
        <end position="332"/>
    </location>
</feature>
<protein>
    <recommendedName>
        <fullName>Sensor protein kinase GraS</fullName>
        <ecNumber>2.7.13.3</ecNumber>
    </recommendedName>
    <alternativeName>
        <fullName>Glycopeptide resistance-associated protein S</fullName>
    </alternativeName>
</protein>
<comment type="function">
    <text evidence="1">Member of the two-component regulatory system GraR/GraS involved in resistance against cationic antimicrobial peptides (CAMPs). Functions as a sensor protein kinase which phosphorylates GraR through the auxiliary protein GraX. In turn, GraR up-regulates many genes such as adhesins, exoproteins, transporters, toxins, and proteins involved in cell wall synthesis. Down-regulates the expression of many genes involved in RNA and amino acid synthesis or glycolysis.</text>
</comment>
<comment type="catalytic activity">
    <reaction>
        <text>ATP + protein L-histidine = ADP + protein N-phospho-L-histidine.</text>
        <dbReference type="EC" id="2.7.13.3"/>
    </reaction>
</comment>
<comment type="subunit">
    <text evidence="1">Interacts with GraX.</text>
</comment>
<comment type="subcellular location">
    <subcellularLocation>
        <location evidence="4">Cell membrane</location>
        <topology evidence="4">Multi-pass membrane protein</topology>
    </subcellularLocation>
</comment>
<name>GRAS_STAAE</name>
<evidence type="ECO:0000250" key="1">
    <source>
        <dbReference type="UniProtKB" id="Q2G0D9"/>
    </source>
</evidence>
<evidence type="ECO:0000255" key="2"/>
<evidence type="ECO:0000255" key="3">
    <source>
        <dbReference type="PROSITE-ProRule" id="PRU00107"/>
    </source>
</evidence>
<evidence type="ECO:0000305" key="4"/>
<gene>
    <name type="primary">graS</name>
    <name type="ordered locus">NWMN_0629</name>
</gene>
<reference key="1">
    <citation type="journal article" date="2008" name="J. Bacteriol.">
        <title>Genome sequence of Staphylococcus aureus strain Newman and comparative analysis of staphylococcal genomes: polymorphism and evolution of two major pathogenicity islands.</title>
        <authorList>
            <person name="Baba T."/>
            <person name="Bae T."/>
            <person name="Schneewind O."/>
            <person name="Takeuchi F."/>
            <person name="Hiramatsu K."/>
        </authorList>
    </citation>
    <scope>NUCLEOTIDE SEQUENCE [LARGE SCALE GENOMIC DNA]</scope>
    <source>
        <strain>Newman</strain>
    </source>
</reference>